<reference key="1">
    <citation type="journal article" date="2009" name="PLoS ONE">
        <title>Complete genome sequence of Francisella tularensis subspecies holarctica FTNF002-00.</title>
        <authorList>
            <person name="Barabote R.D."/>
            <person name="Xie G."/>
            <person name="Brettin T.S."/>
            <person name="Hinrichs S.H."/>
            <person name="Fey P.D."/>
            <person name="Jay J.J."/>
            <person name="Engle J.L."/>
            <person name="Godbole S.D."/>
            <person name="Noronha J.M."/>
            <person name="Scheuermann R.H."/>
            <person name="Zhou L.W."/>
            <person name="Lion C."/>
            <person name="Dempsey M.P."/>
        </authorList>
    </citation>
    <scope>NUCLEOTIDE SEQUENCE [LARGE SCALE GENOMIC DNA]</scope>
    <source>
        <strain>FTNF002-00 / FTA</strain>
    </source>
</reference>
<sequence>MQLSPSEISGLIKQRIEKFDNSVELKSEGTIVSVADGIVTIYGLNDVTAGEMIKLPGDVYGLALNLNTDSVGAVVLGDYEHIKEGDKAYCTGRILEVPVGEALLGRVVDALGNPIDGKGEVATDLTSPIEKIAPGVIWRKSVDQALQTGIKSIDSMVPIGRGQRELIIGDRQIGKTAIAVDTIINQKGTGVKCIYVAIGQKASTIANIVRQLEEYGAMEHTIIVAATASDSAALQYIAPYAGCSMGEYFRDRGQDALIVYDDLTKQAWAYRQISLLLRRPPGREAYPGDVFYLHSRLLERAARVNEEYVEKFTNGEVKGKTGSLTALPIIETQAGDISAFVPTNVISITDGQIFLETDLFNSGLRPAINPGNSVSRVGGAAQTKIIKKLGGGIRLALAQYRELEAFSQFASDLDEATRAQLNRGQRVTELLKQKQFSTLSVALMALSLYAADNGYLDNLEVSEVIPFESALHALAETKYSDVIAEINETDKYDADIADKLKIIVEDCKANQAW</sequence>
<dbReference type="EC" id="7.1.2.2" evidence="1"/>
<dbReference type="EMBL" id="CP000803">
    <property type="protein sequence ID" value="ABU62379.1"/>
    <property type="molecule type" value="Genomic_DNA"/>
</dbReference>
<dbReference type="RefSeq" id="WP_003017337.1">
    <property type="nucleotide sequence ID" value="NC_009749.1"/>
</dbReference>
<dbReference type="SMR" id="A7NEH6"/>
<dbReference type="KEGG" id="fta:FTA_1904"/>
<dbReference type="HOGENOM" id="CLU_010091_2_1_6"/>
<dbReference type="GO" id="GO:0005886">
    <property type="term" value="C:plasma membrane"/>
    <property type="evidence" value="ECO:0007669"/>
    <property type="project" value="UniProtKB-SubCell"/>
</dbReference>
<dbReference type="GO" id="GO:0045259">
    <property type="term" value="C:proton-transporting ATP synthase complex"/>
    <property type="evidence" value="ECO:0007669"/>
    <property type="project" value="UniProtKB-KW"/>
</dbReference>
<dbReference type="GO" id="GO:0043531">
    <property type="term" value="F:ADP binding"/>
    <property type="evidence" value="ECO:0007669"/>
    <property type="project" value="TreeGrafter"/>
</dbReference>
<dbReference type="GO" id="GO:0005524">
    <property type="term" value="F:ATP binding"/>
    <property type="evidence" value="ECO:0007669"/>
    <property type="project" value="UniProtKB-UniRule"/>
</dbReference>
<dbReference type="GO" id="GO:0046933">
    <property type="term" value="F:proton-transporting ATP synthase activity, rotational mechanism"/>
    <property type="evidence" value="ECO:0007669"/>
    <property type="project" value="UniProtKB-UniRule"/>
</dbReference>
<dbReference type="CDD" id="cd18113">
    <property type="entry name" value="ATP-synt_F1_alpha_C"/>
    <property type="match status" value="1"/>
</dbReference>
<dbReference type="CDD" id="cd18116">
    <property type="entry name" value="ATP-synt_F1_alpha_N"/>
    <property type="match status" value="1"/>
</dbReference>
<dbReference type="CDD" id="cd01132">
    <property type="entry name" value="F1-ATPase_alpha_CD"/>
    <property type="match status" value="1"/>
</dbReference>
<dbReference type="FunFam" id="1.20.150.20:FF:000001">
    <property type="entry name" value="ATP synthase subunit alpha"/>
    <property type="match status" value="1"/>
</dbReference>
<dbReference type="FunFam" id="2.40.30.20:FF:000001">
    <property type="entry name" value="ATP synthase subunit alpha"/>
    <property type="match status" value="1"/>
</dbReference>
<dbReference type="FunFam" id="3.40.50.300:FF:000002">
    <property type="entry name" value="ATP synthase subunit alpha"/>
    <property type="match status" value="1"/>
</dbReference>
<dbReference type="Gene3D" id="2.40.30.20">
    <property type="match status" value="1"/>
</dbReference>
<dbReference type="Gene3D" id="1.20.150.20">
    <property type="entry name" value="ATP synthase alpha/beta chain, C-terminal domain"/>
    <property type="match status" value="1"/>
</dbReference>
<dbReference type="Gene3D" id="3.40.50.300">
    <property type="entry name" value="P-loop containing nucleotide triphosphate hydrolases"/>
    <property type="match status" value="1"/>
</dbReference>
<dbReference type="HAMAP" id="MF_01346">
    <property type="entry name" value="ATP_synth_alpha_bact"/>
    <property type="match status" value="1"/>
</dbReference>
<dbReference type="InterPro" id="IPR023366">
    <property type="entry name" value="ATP_synth_asu-like_sf"/>
</dbReference>
<dbReference type="InterPro" id="IPR000793">
    <property type="entry name" value="ATP_synth_asu_C"/>
</dbReference>
<dbReference type="InterPro" id="IPR038376">
    <property type="entry name" value="ATP_synth_asu_C_sf"/>
</dbReference>
<dbReference type="InterPro" id="IPR033732">
    <property type="entry name" value="ATP_synth_F1_a_nt-bd_dom"/>
</dbReference>
<dbReference type="InterPro" id="IPR005294">
    <property type="entry name" value="ATP_synth_F1_asu"/>
</dbReference>
<dbReference type="InterPro" id="IPR020003">
    <property type="entry name" value="ATPase_a/bsu_AS"/>
</dbReference>
<dbReference type="InterPro" id="IPR004100">
    <property type="entry name" value="ATPase_F1/V1/A1_a/bsu_N"/>
</dbReference>
<dbReference type="InterPro" id="IPR036121">
    <property type="entry name" value="ATPase_F1/V1/A1_a/bsu_N_sf"/>
</dbReference>
<dbReference type="InterPro" id="IPR000194">
    <property type="entry name" value="ATPase_F1/V1/A1_a/bsu_nucl-bd"/>
</dbReference>
<dbReference type="InterPro" id="IPR027417">
    <property type="entry name" value="P-loop_NTPase"/>
</dbReference>
<dbReference type="NCBIfam" id="TIGR00962">
    <property type="entry name" value="atpA"/>
    <property type="match status" value="1"/>
</dbReference>
<dbReference type="NCBIfam" id="NF009884">
    <property type="entry name" value="PRK13343.1"/>
    <property type="match status" value="1"/>
</dbReference>
<dbReference type="PANTHER" id="PTHR48082">
    <property type="entry name" value="ATP SYNTHASE SUBUNIT ALPHA, MITOCHONDRIAL"/>
    <property type="match status" value="1"/>
</dbReference>
<dbReference type="PANTHER" id="PTHR48082:SF2">
    <property type="entry name" value="ATP SYNTHASE SUBUNIT ALPHA, MITOCHONDRIAL"/>
    <property type="match status" value="1"/>
</dbReference>
<dbReference type="Pfam" id="PF00006">
    <property type="entry name" value="ATP-synt_ab"/>
    <property type="match status" value="1"/>
</dbReference>
<dbReference type="Pfam" id="PF00306">
    <property type="entry name" value="ATP-synt_ab_C"/>
    <property type="match status" value="1"/>
</dbReference>
<dbReference type="Pfam" id="PF02874">
    <property type="entry name" value="ATP-synt_ab_N"/>
    <property type="match status" value="1"/>
</dbReference>
<dbReference type="PIRSF" id="PIRSF039088">
    <property type="entry name" value="F_ATPase_subunit_alpha"/>
    <property type="match status" value="1"/>
</dbReference>
<dbReference type="SUPFAM" id="SSF47917">
    <property type="entry name" value="C-terminal domain of alpha and beta subunits of F1 ATP synthase"/>
    <property type="match status" value="1"/>
</dbReference>
<dbReference type="SUPFAM" id="SSF50615">
    <property type="entry name" value="N-terminal domain of alpha and beta subunits of F1 ATP synthase"/>
    <property type="match status" value="1"/>
</dbReference>
<dbReference type="SUPFAM" id="SSF52540">
    <property type="entry name" value="P-loop containing nucleoside triphosphate hydrolases"/>
    <property type="match status" value="1"/>
</dbReference>
<dbReference type="PROSITE" id="PS00152">
    <property type="entry name" value="ATPASE_ALPHA_BETA"/>
    <property type="match status" value="1"/>
</dbReference>
<protein>
    <recommendedName>
        <fullName evidence="1">ATP synthase subunit alpha</fullName>
        <ecNumber evidence="1">7.1.2.2</ecNumber>
    </recommendedName>
    <alternativeName>
        <fullName evidence="1">ATP synthase F1 sector subunit alpha</fullName>
    </alternativeName>
    <alternativeName>
        <fullName evidence="1">F-ATPase subunit alpha</fullName>
    </alternativeName>
</protein>
<evidence type="ECO:0000255" key="1">
    <source>
        <dbReference type="HAMAP-Rule" id="MF_01346"/>
    </source>
</evidence>
<keyword id="KW-0066">ATP synthesis</keyword>
<keyword id="KW-0067">ATP-binding</keyword>
<keyword id="KW-0997">Cell inner membrane</keyword>
<keyword id="KW-1003">Cell membrane</keyword>
<keyword id="KW-0139">CF(1)</keyword>
<keyword id="KW-0375">Hydrogen ion transport</keyword>
<keyword id="KW-0406">Ion transport</keyword>
<keyword id="KW-0472">Membrane</keyword>
<keyword id="KW-0547">Nucleotide-binding</keyword>
<keyword id="KW-1278">Translocase</keyword>
<keyword id="KW-0813">Transport</keyword>
<organism>
    <name type="scientific">Francisella tularensis subsp. holarctica (strain FTNF002-00 / FTA)</name>
    <dbReference type="NCBI Taxonomy" id="458234"/>
    <lineage>
        <taxon>Bacteria</taxon>
        <taxon>Pseudomonadati</taxon>
        <taxon>Pseudomonadota</taxon>
        <taxon>Gammaproteobacteria</taxon>
        <taxon>Thiotrichales</taxon>
        <taxon>Francisellaceae</taxon>
        <taxon>Francisella</taxon>
    </lineage>
</organism>
<accession>A7NEH6</accession>
<name>ATPA_FRATF</name>
<feature type="chain" id="PRO_1000055066" description="ATP synthase subunit alpha">
    <location>
        <begin position="1"/>
        <end position="513"/>
    </location>
</feature>
<feature type="binding site" evidence="1">
    <location>
        <begin position="169"/>
        <end position="176"/>
    </location>
    <ligand>
        <name>ATP</name>
        <dbReference type="ChEBI" id="CHEBI:30616"/>
    </ligand>
</feature>
<feature type="site" description="Required for activity" evidence="1">
    <location>
        <position position="373"/>
    </location>
</feature>
<gene>
    <name evidence="1" type="primary">atpA</name>
    <name type="ordered locus">FTA_1904</name>
</gene>
<comment type="function">
    <text evidence="1">Produces ATP from ADP in the presence of a proton gradient across the membrane. The alpha chain is a regulatory subunit.</text>
</comment>
<comment type="catalytic activity">
    <reaction evidence="1">
        <text>ATP + H2O + 4 H(+)(in) = ADP + phosphate + 5 H(+)(out)</text>
        <dbReference type="Rhea" id="RHEA:57720"/>
        <dbReference type="ChEBI" id="CHEBI:15377"/>
        <dbReference type="ChEBI" id="CHEBI:15378"/>
        <dbReference type="ChEBI" id="CHEBI:30616"/>
        <dbReference type="ChEBI" id="CHEBI:43474"/>
        <dbReference type="ChEBI" id="CHEBI:456216"/>
        <dbReference type="EC" id="7.1.2.2"/>
    </reaction>
</comment>
<comment type="subunit">
    <text evidence="1">F-type ATPases have 2 components, CF(1) - the catalytic core - and CF(0) - the membrane proton channel. CF(1) has five subunits: alpha(3), beta(3), gamma(1), delta(1), epsilon(1). CF(0) has three main subunits: a(1), b(2) and c(9-12). The alpha and beta chains form an alternating ring which encloses part of the gamma chain. CF(1) is attached to CF(0) by a central stalk formed by the gamma and epsilon chains, while a peripheral stalk is formed by the delta and b chains.</text>
</comment>
<comment type="subcellular location">
    <subcellularLocation>
        <location evidence="1">Cell inner membrane</location>
        <topology evidence="1">Peripheral membrane protein</topology>
    </subcellularLocation>
</comment>
<comment type="similarity">
    <text evidence="1">Belongs to the ATPase alpha/beta chains family.</text>
</comment>
<proteinExistence type="inferred from homology"/>